<organism>
    <name type="scientific">Mycolicibacterium smegmatis (strain ATCC 700084 / mc(2)155)</name>
    <name type="common">Mycobacterium smegmatis</name>
    <dbReference type="NCBI Taxonomy" id="246196"/>
    <lineage>
        <taxon>Bacteria</taxon>
        <taxon>Bacillati</taxon>
        <taxon>Actinomycetota</taxon>
        <taxon>Actinomycetes</taxon>
        <taxon>Mycobacteriales</taxon>
        <taxon>Mycobacteriaceae</taxon>
        <taxon>Mycolicibacterium</taxon>
    </lineage>
</organism>
<gene>
    <name type="primary">rpsQ</name>
    <name type="ordered locus">MSMEG_1445</name>
    <name type="ordered locus">MSMEI_1409</name>
</gene>
<keyword id="KW-0002">3D-structure</keyword>
<keyword id="KW-1017">Isopeptide bond</keyword>
<keyword id="KW-1185">Reference proteome</keyword>
<keyword id="KW-0687">Ribonucleoprotein</keyword>
<keyword id="KW-0689">Ribosomal protein</keyword>
<keyword id="KW-0694">RNA-binding</keyword>
<keyword id="KW-0699">rRNA-binding</keyword>
<keyword id="KW-0832">Ubl conjugation</keyword>
<protein>
    <recommendedName>
        <fullName evidence="4">Small ribosomal subunit protein uS17</fullName>
    </recommendedName>
    <alternativeName>
        <fullName>30S ribosomal protein S17</fullName>
    </alternativeName>
</protein>
<proteinExistence type="evidence at protein level"/>
<reference key="1">
    <citation type="submission" date="2006-10" db="EMBL/GenBank/DDBJ databases">
        <authorList>
            <person name="Fleischmann R.D."/>
            <person name="Dodson R.J."/>
            <person name="Haft D.H."/>
            <person name="Merkel J.S."/>
            <person name="Nelson W.C."/>
            <person name="Fraser C.M."/>
        </authorList>
    </citation>
    <scope>NUCLEOTIDE SEQUENCE [LARGE SCALE GENOMIC DNA]</scope>
    <source>
        <strain>ATCC 700084 / mc(2)155</strain>
    </source>
</reference>
<reference key="2">
    <citation type="journal article" date="2007" name="Genome Biol.">
        <title>Interrupted coding sequences in Mycobacterium smegmatis: authentic mutations or sequencing errors?</title>
        <authorList>
            <person name="Deshayes C."/>
            <person name="Perrodou E."/>
            <person name="Gallien S."/>
            <person name="Euphrasie D."/>
            <person name="Schaeffer C."/>
            <person name="Van-Dorsselaer A."/>
            <person name="Poch O."/>
            <person name="Lecompte O."/>
            <person name="Reyrat J.-M."/>
        </authorList>
    </citation>
    <scope>NUCLEOTIDE SEQUENCE [LARGE SCALE GENOMIC DNA]</scope>
    <source>
        <strain>ATCC 700084 / mc(2)155</strain>
    </source>
</reference>
<reference key="3">
    <citation type="journal article" date="2009" name="Genome Res.">
        <title>Ortho-proteogenomics: multiple proteomes investigation through orthology and a new MS-based protocol.</title>
        <authorList>
            <person name="Gallien S."/>
            <person name="Perrodou E."/>
            <person name="Carapito C."/>
            <person name="Deshayes C."/>
            <person name="Reyrat J.-M."/>
            <person name="Van Dorsselaer A."/>
            <person name="Poch O."/>
            <person name="Schaeffer C."/>
            <person name="Lecompte O."/>
        </authorList>
    </citation>
    <scope>NUCLEOTIDE SEQUENCE [LARGE SCALE GENOMIC DNA]</scope>
    <source>
        <strain>ATCC 700084 / mc(2)155</strain>
    </source>
</reference>
<reference key="4">
    <citation type="journal article" date="2010" name="Mol. Biosyst.">
        <title>Expansion of the mycobacterial 'PUPylome'.</title>
        <authorList>
            <person name="Watrous J."/>
            <person name="Burns K."/>
            <person name="Liu W.T."/>
            <person name="Patel A."/>
            <person name="Hook V."/>
            <person name="Bafna V."/>
            <person name="Barry C.E. III"/>
            <person name="Bark S."/>
            <person name="Dorrestein P.C."/>
        </authorList>
    </citation>
    <scope>PUPYLATION AT LYS-96</scope>
    <scope>IDENTIFICATION BY MASS SPECTROMETRY</scope>
</reference>
<feature type="chain" id="PRO_0000396098" description="Small ribosomal subunit protein uS17">
    <location>
        <begin position="1"/>
        <end position="98"/>
    </location>
</feature>
<feature type="region of interest" description="Disordered" evidence="2">
    <location>
        <begin position="1"/>
        <end position="21"/>
    </location>
</feature>
<feature type="cross-link" description="Isoglutamyl lysine isopeptide (Lys-Gln) (interchain with Q-Cter in protein Pup)" evidence="3">
    <location>
        <position position="96"/>
    </location>
</feature>
<feature type="strand" evidence="5">
    <location>
        <begin position="22"/>
        <end position="32"/>
    </location>
</feature>
<feature type="strand" evidence="5">
    <location>
        <begin position="35"/>
        <end position="45"/>
    </location>
</feature>
<feature type="turn" evidence="5">
    <location>
        <begin position="47"/>
        <end position="49"/>
    </location>
</feature>
<feature type="strand" evidence="5">
    <location>
        <begin position="52"/>
        <end position="62"/>
    </location>
</feature>
<feature type="strand" evidence="5">
    <location>
        <begin position="73"/>
        <end position="83"/>
    </location>
</feature>
<feature type="strand" evidence="5">
    <location>
        <begin position="86"/>
        <end position="95"/>
    </location>
</feature>
<accession>A0QSE0</accession>
<accession>I7FY86</accession>
<dbReference type="EMBL" id="CP000480">
    <property type="protein sequence ID" value="ABK72361.1"/>
    <property type="molecule type" value="Genomic_DNA"/>
</dbReference>
<dbReference type="EMBL" id="CP001663">
    <property type="protein sequence ID" value="AFP37882.1"/>
    <property type="molecule type" value="Genomic_DNA"/>
</dbReference>
<dbReference type="RefSeq" id="WP_011727674.1">
    <property type="nucleotide sequence ID" value="NZ_SIJM01000016.1"/>
</dbReference>
<dbReference type="RefSeq" id="YP_885828.1">
    <property type="nucleotide sequence ID" value="NC_008596.1"/>
</dbReference>
<dbReference type="PDB" id="5O5J">
    <property type="method" value="EM"/>
    <property type="resolution" value="3.45 A"/>
    <property type="chains" value="Q=1-98"/>
</dbReference>
<dbReference type="PDB" id="5O61">
    <property type="method" value="EM"/>
    <property type="resolution" value="3.31 A"/>
    <property type="chains" value="BQ=1-98"/>
</dbReference>
<dbReference type="PDB" id="5XYU">
    <property type="method" value="EM"/>
    <property type="resolution" value="3.45 A"/>
    <property type="chains" value="Q=1-98"/>
</dbReference>
<dbReference type="PDB" id="5ZEB">
    <property type="method" value="EM"/>
    <property type="resolution" value="3.40 A"/>
    <property type="chains" value="q=1-98"/>
</dbReference>
<dbReference type="PDB" id="5ZEP">
    <property type="method" value="EM"/>
    <property type="resolution" value="3.40 A"/>
    <property type="chains" value="q=1-98"/>
</dbReference>
<dbReference type="PDB" id="5ZEU">
    <property type="method" value="EM"/>
    <property type="resolution" value="3.70 A"/>
    <property type="chains" value="q=1-98"/>
</dbReference>
<dbReference type="PDB" id="6DZI">
    <property type="method" value="EM"/>
    <property type="resolution" value="3.46 A"/>
    <property type="chains" value="5=4-97"/>
</dbReference>
<dbReference type="PDB" id="6DZK">
    <property type="method" value="EM"/>
    <property type="resolution" value="3.60 A"/>
    <property type="chains" value="Q=1-98"/>
</dbReference>
<dbReference type="PDB" id="8FR8">
    <property type="method" value="EM"/>
    <property type="resolution" value="2.76 A"/>
    <property type="chains" value="r=4-97"/>
</dbReference>
<dbReference type="PDB" id="8V9J">
    <property type="method" value="EM"/>
    <property type="resolution" value="3.10 A"/>
    <property type="chains" value="q=1-98"/>
</dbReference>
<dbReference type="PDB" id="8V9K">
    <property type="method" value="EM"/>
    <property type="resolution" value="3.10 A"/>
    <property type="chains" value="q=1-98"/>
</dbReference>
<dbReference type="PDB" id="8V9L">
    <property type="method" value="EM"/>
    <property type="resolution" value="3.00 A"/>
    <property type="chains" value="q=1-98"/>
</dbReference>
<dbReference type="PDB" id="8VIO">
    <property type="method" value="EM"/>
    <property type="resolution" value="3.26 A"/>
    <property type="chains" value="x=1-98"/>
</dbReference>
<dbReference type="PDB" id="8WHX">
    <property type="method" value="EM"/>
    <property type="resolution" value="2.80 A"/>
    <property type="chains" value="r=1-98"/>
</dbReference>
<dbReference type="PDB" id="8WI7">
    <property type="method" value="EM"/>
    <property type="resolution" value="3.50 A"/>
    <property type="chains" value="r=1-98"/>
</dbReference>
<dbReference type="PDB" id="8WI9">
    <property type="method" value="EM"/>
    <property type="resolution" value="3.50 A"/>
    <property type="chains" value="r=1-98"/>
</dbReference>
<dbReference type="PDB" id="8WIB">
    <property type="method" value="EM"/>
    <property type="resolution" value="3.50 A"/>
    <property type="chains" value="r=1-98"/>
</dbReference>
<dbReference type="PDB" id="8WID">
    <property type="method" value="EM"/>
    <property type="resolution" value="3.50 A"/>
    <property type="chains" value="r=1-98"/>
</dbReference>
<dbReference type="PDB" id="8WIF">
    <property type="method" value="EM"/>
    <property type="resolution" value="2.90 A"/>
    <property type="chains" value="r=1-98"/>
</dbReference>
<dbReference type="PDBsum" id="5O5J"/>
<dbReference type="PDBsum" id="5O61"/>
<dbReference type="PDBsum" id="5XYU"/>
<dbReference type="PDBsum" id="5ZEB"/>
<dbReference type="PDBsum" id="5ZEP"/>
<dbReference type="PDBsum" id="5ZEU"/>
<dbReference type="PDBsum" id="6DZI"/>
<dbReference type="PDBsum" id="6DZK"/>
<dbReference type="PDBsum" id="8FR8"/>
<dbReference type="PDBsum" id="8V9J"/>
<dbReference type="PDBsum" id="8V9K"/>
<dbReference type="PDBsum" id="8V9L"/>
<dbReference type="PDBsum" id="8VIO"/>
<dbReference type="PDBsum" id="8WHX"/>
<dbReference type="PDBsum" id="8WI7"/>
<dbReference type="PDBsum" id="8WI9"/>
<dbReference type="PDBsum" id="8WIB"/>
<dbReference type="PDBsum" id="8WID"/>
<dbReference type="PDBsum" id="8WIF"/>
<dbReference type="EMDB" id="EMD-29397"/>
<dbReference type="EMDB" id="EMD-3748"/>
<dbReference type="EMDB" id="EMD-3751"/>
<dbReference type="EMDB" id="EMD-37551"/>
<dbReference type="EMDB" id="EMD-37559"/>
<dbReference type="EMDB" id="EMD-37561"/>
<dbReference type="EMDB" id="EMD-37562"/>
<dbReference type="EMDB" id="EMD-37564"/>
<dbReference type="EMDB" id="EMD-37565"/>
<dbReference type="EMDB" id="EMD-43074"/>
<dbReference type="EMDB" id="EMD-43075"/>
<dbReference type="EMDB" id="EMD-43076"/>
<dbReference type="EMDB" id="EMD-43267"/>
<dbReference type="EMDB" id="EMD-6790"/>
<dbReference type="EMDB" id="EMD-6920"/>
<dbReference type="EMDB" id="EMD-6921"/>
<dbReference type="EMDB" id="EMD-6923"/>
<dbReference type="EMDB" id="EMD-8932"/>
<dbReference type="EMDB" id="EMD-8934"/>
<dbReference type="SMR" id="A0QSE0"/>
<dbReference type="IntAct" id="A0QSE0">
    <property type="interactions" value="1"/>
</dbReference>
<dbReference type="STRING" id="246196.MSMEG_1445"/>
<dbReference type="PaxDb" id="246196-MSMEI_1409"/>
<dbReference type="GeneID" id="93456289"/>
<dbReference type="KEGG" id="msb:LJ00_07210"/>
<dbReference type="KEGG" id="msg:MSMEI_1409"/>
<dbReference type="KEGG" id="msm:MSMEG_1445"/>
<dbReference type="PATRIC" id="fig|246196.19.peg.1431"/>
<dbReference type="eggNOG" id="COG0186">
    <property type="taxonomic scope" value="Bacteria"/>
</dbReference>
<dbReference type="OrthoDB" id="9811714at2"/>
<dbReference type="Proteomes" id="UP000000757">
    <property type="component" value="Chromosome"/>
</dbReference>
<dbReference type="Proteomes" id="UP000006158">
    <property type="component" value="Chromosome"/>
</dbReference>
<dbReference type="GO" id="GO:0022627">
    <property type="term" value="C:cytosolic small ribosomal subunit"/>
    <property type="evidence" value="ECO:0007669"/>
    <property type="project" value="TreeGrafter"/>
</dbReference>
<dbReference type="GO" id="GO:0019843">
    <property type="term" value="F:rRNA binding"/>
    <property type="evidence" value="ECO:0007669"/>
    <property type="project" value="UniProtKB-UniRule"/>
</dbReference>
<dbReference type="GO" id="GO:0003735">
    <property type="term" value="F:structural constituent of ribosome"/>
    <property type="evidence" value="ECO:0007669"/>
    <property type="project" value="InterPro"/>
</dbReference>
<dbReference type="GO" id="GO:0006412">
    <property type="term" value="P:translation"/>
    <property type="evidence" value="ECO:0007669"/>
    <property type="project" value="UniProtKB-UniRule"/>
</dbReference>
<dbReference type="CDD" id="cd00364">
    <property type="entry name" value="Ribosomal_uS17"/>
    <property type="match status" value="1"/>
</dbReference>
<dbReference type="FunFam" id="2.40.50.140:FF:000026">
    <property type="entry name" value="30S ribosomal protein S17"/>
    <property type="match status" value="1"/>
</dbReference>
<dbReference type="Gene3D" id="2.40.50.140">
    <property type="entry name" value="Nucleic acid-binding proteins"/>
    <property type="match status" value="1"/>
</dbReference>
<dbReference type="HAMAP" id="MF_01345_B">
    <property type="entry name" value="Ribosomal_uS17_B"/>
    <property type="match status" value="1"/>
</dbReference>
<dbReference type="InterPro" id="IPR012340">
    <property type="entry name" value="NA-bd_OB-fold"/>
</dbReference>
<dbReference type="InterPro" id="IPR000266">
    <property type="entry name" value="Ribosomal_uS17"/>
</dbReference>
<dbReference type="InterPro" id="IPR019984">
    <property type="entry name" value="Ribosomal_uS17_bact/chlr"/>
</dbReference>
<dbReference type="InterPro" id="IPR019979">
    <property type="entry name" value="Ribosomal_uS17_CS"/>
</dbReference>
<dbReference type="NCBIfam" id="NF004123">
    <property type="entry name" value="PRK05610.1"/>
    <property type="match status" value="1"/>
</dbReference>
<dbReference type="NCBIfam" id="TIGR03635">
    <property type="entry name" value="uS17_bact"/>
    <property type="match status" value="1"/>
</dbReference>
<dbReference type="PANTHER" id="PTHR10744">
    <property type="entry name" value="40S RIBOSOMAL PROTEIN S11 FAMILY MEMBER"/>
    <property type="match status" value="1"/>
</dbReference>
<dbReference type="PANTHER" id="PTHR10744:SF1">
    <property type="entry name" value="SMALL RIBOSOMAL SUBUNIT PROTEIN US17M"/>
    <property type="match status" value="1"/>
</dbReference>
<dbReference type="Pfam" id="PF00366">
    <property type="entry name" value="Ribosomal_S17"/>
    <property type="match status" value="1"/>
</dbReference>
<dbReference type="PRINTS" id="PR00973">
    <property type="entry name" value="RIBOSOMALS17"/>
</dbReference>
<dbReference type="SUPFAM" id="SSF50249">
    <property type="entry name" value="Nucleic acid-binding proteins"/>
    <property type="match status" value="1"/>
</dbReference>
<dbReference type="PROSITE" id="PS00056">
    <property type="entry name" value="RIBOSOMAL_S17"/>
    <property type="match status" value="1"/>
</dbReference>
<evidence type="ECO:0000250" key="1"/>
<evidence type="ECO:0000256" key="2">
    <source>
        <dbReference type="SAM" id="MobiDB-lite"/>
    </source>
</evidence>
<evidence type="ECO:0000269" key="3">
    <source>
    </source>
</evidence>
<evidence type="ECO:0000305" key="4"/>
<evidence type="ECO:0007829" key="5">
    <source>
        <dbReference type="PDB" id="5XYU"/>
    </source>
</evidence>
<name>RS17_MYCS2</name>
<sequence length="98" mass="11102">MADQKGPKYTPAAEKPRGRRKTAIGYVVSDKMQKTIVVELEDRKSHPLYGKIIRTTKKVKAHDENGEAGIGDRVSLMETRPLSATKRWRLVEILEKAK</sequence>
<comment type="function">
    <text evidence="1">One of the primary rRNA binding proteins, it binds specifically to the 5'-end of 16S ribosomal RNA.</text>
</comment>
<comment type="subunit">
    <text evidence="1">Part of the 30S ribosomal subunit.</text>
</comment>
<comment type="similarity">
    <text evidence="4">Belongs to the universal ribosomal protein uS17 family.</text>
</comment>